<protein>
    <recommendedName>
        <fullName evidence="1">Elongation factor P</fullName>
        <shortName evidence="1">EF-P</shortName>
    </recommendedName>
</protein>
<proteinExistence type="inferred from homology"/>
<keyword id="KW-0963">Cytoplasm</keyword>
<keyword id="KW-0251">Elongation factor</keyword>
<keyword id="KW-0379">Hydroxylation</keyword>
<keyword id="KW-0648">Protein biosynthesis</keyword>
<comment type="function">
    <text evidence="1">Involved in peptide bond synthesis. Alleviates ribosome stalling that occurs when 3 or more consecutive Pro residues or the sequence PPG is present in a protein, possibly by augmenting the peptidyl transferase activity of the ribosome. Modification of Lys-34 is required for alleviation.</text>
</comment>
<comment type="pathway">
    <text evidence="1">Protein biosynthesis; polypeptide chain elongation.</text>
</comment>
<comment type="subcellular location">
    <subcellularLocation>
        <location evidence="1">Cytoplasm</location>
    </subcellularLocation>
</comment>
<comment type="PTM">
    <text evidence="1">May be beta-lysylated on the epsilon-amino group of Lys-34 by the combined action of EpmA and EpmB, and then hydroxylated on the C5 position of the same residue by EpmC (if this protein is present). Lysylation is critical for the stimulatory effect of EF-P on peptide-bond formation. The lysylation moiety may extend toward the peptidyltransferase center and stabilize the terminal 3-CCA end of the tRNA. Hydroxylation of the C5 position on Lys-34 may allow additional potential stabilizing hydrogen-bond interactions with the P-tRNA.</text>
</comment>
<comment type="similarity">
    <text evidence="1">Belongs to the elongation factor P family.</text>
</comment>
<gene>
    <name evidence="1" type="primary">efp</name>
    <name type="ordered locus">A1S_2419</name>
</gene>
<organism>
    <name type="scientific">Acinetobacter baumannii (strain ATCC 17978 / DSM 105126 / CIP 53.77 / LMG 1025 / NCDC KC755 / 5377)</name>
    <dbReference type="NCBI Taxonomy" id="400667"/>
    <lineage>
        <taxon>Bacteria</taxon>
        <taxon>Pseudomonadati</taxon>
        <taxon>Pseudomonadota</taxon>
        <taxon>Gammaproteobacteria</taxon>
        <taxon>Moraxellales</taxon>
        <taxon>Moraxellaceae</taxon>
        <taxon>Acinetobacter</taxon>
        <taxon>Acinetobacter calcoaceticus/baumannii complex</taxon>
    </lineage>
</organism>
<dbReference type="EMBL" id="CP000521">
    <property type="protein sequence ID" value="ABO12837.2"/>
    <property type="molecule type" value="Genomic_DNA"/>
</dbReference>
<dbReference type="RefSeq" id="WP_000035083.1">
    <property type="nucleotide sequence ID" value="NZ_CP053098.1"/>
</dbReference>
<dbReference type="SMR" id="A3M7E3"/>
<dbReference type="GeneID" id="92894727"/>
<dbReference type="KEGG" id="acb:A1S_2419"/>
<dbReference type="HOGENOM" id="CLU_074944_0_0_6"/>
<dbReference type="UniPathway" id="UPA00345"/>
<dbReference type="GO" id="GO:0005737">
    <property type="term" value="C:cytoplasm"/>
    <property type="evidence" value="ECO:0007669"/>
    <property type="project" value="UniProtKB-SubCell"/>
</dbReference>
<dbReference type="GO" id="GO:0003746">
    <property type="term" value="F:translation elongation factor activity"/>
    <property type="evidence" value="ECO:0007669"/>
    <property type="project" value="UniProtKB-UniRule"/>
</dbReference>
<dbReference type="GO" id="GO:0043043">
    <property type="term" value="P:peptide biosynthetic process"/>
    <property type="evidence" value="ECO:0007669"/>
    <property type="project" value="InterPro"/>
</dbReference>
<dbReference type="CDD" id="cd04470">
    <property type="entry name" value="S1_EF-P_repeat_1"/>
    <property type="match status" value="1"/>
</dbReference>
<dbReference type="CDD" id="cd05794">
    <property type="entry name" value="S1_EF-P_repeat_2"/>
    <property type="match status" value="1"/>
</dbReference>
<dbReference type="FunFam" id="2.30.30.30:FF:000003">
    <property type="entry name" value="Elongation factor P"/>
    <property type="match status" value="1"/>
</dbReference>
<dbReference type="FunFam" id="2.40.50.140:FF:000004">
    <property type="entry name" value="Elongation factor P"/>
    <property type="match status" value="1"/>
</dbReference>
<dbReference type="FunFam" id="2.40.50.140:FF:000009">
    <property type="entry name" value="Elongation factor P"/>
    <property type="match status" value="1"/>
</dbReference>
<dbReference type="Gene3D" id="2.30.30.30">
    <property type="match status" value="1"/>
</dbReference>
<dbReference type="Gene3D" id="2.40.50.140">
    <property type="entry name" value="Nucleic acid-binding proteins"/>
    <property type="match status" value="2"/>
</dbReference>
<dbReference type="HAMAP" id="MF_00141">
    <property type="entry name" value="EF_P"/>
    <property type="match status" value="1"/>
</dbReference>
<dbReference type="InterPro" id="IPR015365">
    <property type="entry name" value="Elong-fact-P_C"/>
</dbReference>
<dbReference type="InterPro" id="IPR012340">
    <property type="entry name" value="NA-bd_OB-fold"/>
</dbReference>
<dbReference type="InterPro" id="IPR014722">
    <property type="entry name" value="Rib_uL2_dom2"/>
</dbReference>
<dbReference type="InterPro" id="IPR020599">
    <property type="entry name" value="Transl_elong_fac_P/YeiP"/>
</dbReference>
<dbReference type="InterPro" id="IPR013185">
    <property type="entry name" value="Transl_elong_KOW-like"/>
</dbReference>
<dbReference type="InterPro" id="IPR001059">
    <property type="entry name" value="Transl_elong_P/YeiP_cen"/>
</dbReference>
<dbReference type="InterPro" id="IPR011768">
    <property type="entry name" value="Transl_elongation_fac_P"/>
</dbReference>
<dbReference type="InterPro" id="IPR008991">
    <property type="entry name" value="Translation_prot_SH3-like_sf"/>
</dbReference>
<dbReference type="NCBIfam" id="TIGR00038">
    <property type="entry name" value="efp"/>
    <property type="match status" value="1"/>
</dbReference>
<dbReference type="NCBIfam" id="NF001810">
    <property type="entry name" value="PRK00529.1"/>
    <property type="match status" value="1"/>
</dbReference>
<dbReference type="PANTHER" id="PTHR30053">
    <property type="entry name" value="ELONGATION FACTOR P"/>
    <property type="match status" value="1"/>
</dbReference>
<dbReference type="PANTHER" id="PTHR30053:SF12">
    <property type="entry name" value="ELONGATION FACTOR P (EF-P) FAMILY PROTEIN"/>
    <property type="match status" value="1"/>
</dbReference>
<dbReference type="Pfam" id="PF01132">
    <property type="entry name" value="EFP"/>
    <property type="match status" value="1"/>
</dbReference>
<dbReference type="Pfam" id="PF08207">
    <property type="entry name" value="EFP_N"/>
    <property type="match status" value="1"/>
</dbReference>
<dbReference type="Pfam" id="PF09285">
    <property type="entry name" value="Elong-fact-P_C"/>
    <property type="match status" value="1"/>
</dbReference>
<dbReference type="PIRSF" id="PIRSF005901">
    <property type="entry name" value="EF-P"/>
    <property type="match status" value="1"/>
</dbReference>
<dbReference type="SMART" id="SM01185">
    <property type="entry name" value="EFP"/>
    <property type="match status" value="1"/>
</dbReference>
<dbReference type="SMART" id="SM00841">
    <property type="entry name" value="Elong-fact-P_C"/>
    <property type="match status" value="1"/>
</dbReference>
<dbReference type="SUPFAM" id="SSF50249">
    <property type="entry name" value="Nucleic acid-binding proteins"/>
    <property type="match status" value="2"/>
</dbReference>
<dbReference type="SUPFAM" id="SSF50104">
    <property type="entry name" value="Translation proteins SH3-like domain"/>
    <property type="match status" value="1"/>
</dbReference>
<sequence>MANYSTNDFKPGLKVMLDSNPCSIMENEYVKPGKGQAFNRVKLRNLKTGKVLEKTFKSGDTLEAADIVEVEMNYLYNDGEMWHFMDPESFEQIAADKTAMGDAAKWLKDDSNETCTIMLFNGVPLNVNAPNFVVLKVVETDPGVRGDTSGGGGKPAKLETGAVVRVPLFVQQEESVRVDTRTGEYLERA</sequence>
<accession>A3M7E3</accession>
<name>EFP_ACIBT</name>
<feature type="chain" id="PRO_1000096116" description="Elongation factor P">
    <location>
        <begin position="1"/>
        <end position="189"/>
    </location>
</feature>
<feature type="modified residue" description="N6-(3,6-diaminohexanoyl)-5-hydroxylysine" evidence="1">
    <location>
        <position position="34"/>
    </location>
</feature>
<reference key="1">
    <citation type="journal article" date="2007" name="Genes Dev.">
        <title>New insights into Acinetobacter baumannii pathogenesis revealed by high-density pyrosequencing and transposon mutagenesis.</title>
        <authorList>
            <person name="Smith M.G."/>
            <person name="Gianoulis T.A."/>
            <person name="Pukatzki S."/>
            <person name="Mekalanos J.J."/>
            <person name="Ornston L.N."/>
            <person name="Gerstein M."/>
            <person name="Snyder M."/>
        </authorList>
    </citation>
    <scope>NUCLEOTIDE SEQUENCE [LARGE SCALE GENOMIC DNA]</scope>
    <source>
        <strain>ATCC 17978 / DSM 105126 / CIP 53.77 / LMG 1025 / NCDC KC755 / 5377</strain>
    </source>
</reference>
<evidence type="ECO:0000255" key="1">
    <source>
        <dbReference type="HAMAP-Rule" id="MF_00141"/>
    </source>
</evidence>